<protein>
    <recommendedName>
        <fullName>UPF0127 protein PYRAB11210</fullName>
    </recommendedName>
</protein>
<evidence type="ECO:0000305" key="1"/>
<dbReference type="EMBL" id="AJ248286">
    <property type="protein sequence ID" value="CAB50032.1"/>
    <property type="molecule type" value="Genomic_DNA"/>
</dbReference>
<dbReference type="EMBL" id="HE613800">
    <property type="protein sequence ID" value="CCE70534.1"/>
    <property type="molecule type" value="Genomic_DNA"/>
</dbReference>
<dbReference type="PIR" id="C75091">
    <property type="entry name" value="C75091"/>
</dbReference>
<dbReference type="RefSeq" id="WP_010868239.1">
    <property type="nucleotide sequence ID" value="NC_000868.1"/>
</dbReference>
<dbReference type="SMR" id="Q9UZM5"/>
<dbReference type="STRING" id="272844.PAB0743"/>
<dbReference type="KEGG" id="pab:PAB0743"/>
<dbReference type="PATRIC" id="fig|272844.11.peg.1177"/>
<dbReference type="eggNOG" id="arCOG03113">
    <property type="taxonomic scope" value="Archaea"/>
</dbReference>
<dbReference type="HOGENOM" id="CLU_097039_4_2_2"/>
<dbReference type="OrthoDB" id="64208at2157"/>
<dbReference type="PhylomeDB" id="Q9UZM5"/>
<dbReference type="Proteomes" id="UP000000810">
    <property type="component" value="Chromosome"/>
</dbReference>
<dbReference type="Proteomes" id="UP000009139">
    <property type="component" value="Chromosome"/>
</dbReference>
<dbReference type="Gene3D" id="2.60.120.1140">
    <property type="entry name" value="Protein of unknown function DUF192"/>
    <property type="match status" value="1"/>
</dbReference>
<dbReference type="HAMAP" id="MF_00263">
    <property type="entry name" value="UPF0127"/>
    <property type="match status" value="1"/>
</dbReference>
<dbReference type="InterPro" id="IPR003795">
    <property type="entry name" value="DUF192"/>
</dbReference>
<dbReference type="InterPro" id="IPR038695">
    <property type="entry name" value="Saro_0823-like_sf"/>
</dbReference>
<dbReference type="InterPro" id="IPR022906">
    <property type="entry name" value="UPF0127"/>
</dbReference>
<dbReference type="NCBIfam" id="NF002996">
    <property type="entry name" value="PRK03760.1"/>
    <property type="match status" value="1"/>
</dbReference>
<dbReference type="PANTHER" id="PTHR37953">
    <property type="entry name" value="UPF0127 PROTEIN MJ1496"/>
    <property type="match status" value="1"/>
</dbReference>
<dbReference type="PANTHER" id="PTHR37953:SF1">
    <property type="entry name" value="UPF0127 PROTEIN MJ1496"/>
    <property type="match status" value="1"/>
</dbReference>
<dbReference type="Pfam" id="PF02643">
    <property type="entry name" value="DUF192"/>
    <property type="match status" value="1"/>
</dbReference>
<comment type="similarity">
    <text evidence="1">Belongs to the UPF0127 family.</text>
</comment>
<feature type="chain" id="PRO_0000150052" description="UPF0127 protein PYRAB11210">
    <location>
        <begin position="1"/>
        <end position="117"/>
    </location>
</feature>
<name>Y1121_PYRAB</name>
<gene>
    <name type="ordered locus">PYRAB11210</name>
    <name type="ORF">PAB0743</name>
</gene>
<sequence length="117" mass="13410">MGVIINESKSVKWEGKVEIADNFIKRAFGFMLRNPGHALIFILPFETRFNATIHGFFMLKSIDVIFLDSEKTVVDVTTLRPWRIYVPKKAAKYVIEGPVGLRKVLKVEVGDKVEWIT</sequence>
<organism>
    <name type="scientific">Pyrococcus abyssi (strain GE5 / Orsay)</name>
    <dbReference type="NCBI Taxonomy" id="272844"/>
    <lineage>
        <taxon>Archaea</taxon>
        <taxon>Methanobacteriati</taxon>
        <taxon>Methanobacteriota</taxon>
        <taxon>Thermococci</taxon>
        <taxon>Thermococcales</taxon>
        <taxon>Thermococcaceae</taxon>
        <taxon>Pyrococcus</taxon>
    </lineage>
</organism>
<reference key="1">
    <citation type="journal article" date="2003" name="Mol. Microbiol.">
        <title>An integrated analysis of the genome of the hyperthermophilic archaeon Pyrococcus abyssi.</title>
        <authorList>
            <person name="Cohen G.N."/>
            <person name="Barbe V."/>
            <person name="Flament D."/>
            <person name="Galperin M."/>
            <person name="Heilig R."/>
            <person name="Lecompte O."/>
            <person name="Poch O."/>
            <person name="Prieur D."/>
            <person name="Querellou J."/>
            <person name="Ripp R."/>
            <person name="Thierry J.-C."/>
            <person name="Van der Oost J."/>
            <person name="Weissenbach J."/>
            <person name="Zivanovic Y."/>
            <person name="Forterre P."/>
        </authorList>
    </citation>
    <scope>NUCLEOTIDE SEQUENCE [LARGE SCALE GENOMIC DNA]</scope>
    <source>
        <strain>GE5 / Orsay</strain>
    </source>
</reference>
<reference key="2">
    <citation type="journal article" date="2012" name="Curr. Microbiol.">
        <title>Re-annotation of two hyperthermophilic archaea Pyrococcus abyssi GE5 and Pyrococcus furiosus DSM 3638.</title>
        <authorList>
            <person name="Gao J."/>
            <person name="Wang J."/>
        </authorList>
    </citation>
    <scope>GENOME REANNOTATION</scope>
    <source>
        <strain>GE5 / Orsay</strain>
    </source>
</reference>
<accession>Q9UZM5</accession>
<accession>G8ZJS5</accession>
<proteinExistence type="inferred from homology"/>